<sequence>MAMAAAASLLPACAAPTLPGRAFRPRRNSTPTASLSCDGGSRGRGVGLGVILGGGRAQGVRRNAAAETYVPGSGKYIAPDYLVKKVTAKELEELVRGERKVPLIVDFYATWCGPCVLMAQDIEMLAVEYENNALFVKVDTDDEYELARDMQVRGLPTLYFFSPDQSKDALRTEGLIPIDMIRNIIDNEL</sequence>
<feature type="transit peptide" description="Chloroplast" evidence="3">
    <location>
        <begin position="1"/>
        <end position="36"/>
    </location>
</feature>
<feature type="chain" id="PRO_0000430873" description="Thioredoxin-like protein CITRX, chloroplastic">
    <location>
        <begin position="37"/>
        <end position="189"/>
    </location>
</feature>
<feature type="domain" description="Thioredoxin" evidence="4">
    <location>
        <begin position="72"/>
        <end position="189"/>
    </location>
</feature>
<feature type="active site" description="Nucleophile" evidence="1">
    <location>
        <position position="112"/>
    </location>
</feature>
<feature type="active site" description="Nucleophile" evidence="1">
    <location>
        <position position="115"/>
    </location>
</feature>
<feature type="site" description="Deprotonates C-terminal active site Cys" evidence="1">
    <location>
        <position position="106"/>
    </location>
</feature>
<feature type="site" description="Contributes to redox potential value" evidence="1">
    <location>
        <position position="113"/>
    </location>
</feature>
<feature type="site" description="Contributes to redox potential value" evidence="1">
    <location>
        <position position="114"/>
    </location>
</feature>
<feature type="disulfide bond" description="Redox-active" evidence="4">
    <location>
        <begin position="112"/>
        <end position="115"/>
    </location>
</feature>
<name>CITRX_ORYSI</name>
<proteinExistence type="inferred from homology"/>
<dbReference type="EC" id="1.8.-.-" evidence="6"/>
<dbReference type="EMBL" id="CM000133">
    <property type="protein sequence ID" value="EAZ06817.1"/>
    <property type="molecule type" value="Genomic_DNA"/>
</dbReference>
<dbReference type="SMR" id="A2YUQ6"/>
<dbReference type="STRING" id="39946.A2YUQ6"/>
<dbReference type="EnsemblPlants" id="BGIOSGA027053-TA">
    <property type="protein sequence ID" value="BGIOSGA027053-PA"/>
    <property type="gene ID" value="BGIOSGA027053"/>
</dbReference>
<dbReference type="EnsemblPlants" id="OsKYG_08g0013880.01">
    <property type="protein sequence ID" value="OsKYG_08g0013880.01"/>
    <property type="gene ID" value="OsKYG_08g0013880"/>
</dbReference>
<dbReference type="EnsemblPlants" id="OsLiXu_08g0014530.01">
    <property type="protein sequence ID" value="OsLiXu_08g0014530.01"/>
    <property type="gene ID" value="OsLiXu_08g0014530"/>
</dbReference>
<dbReference type="EnsemblPlants" id="OsZS97_08G014160_01">
    <property type="protein sequence ID" value="OsZS97_08G014160_01"/>
    <property type="gene ID" value="OsZS97_08G014160"/>
</dbReference>
<dbReference type="Gramene" id="BGIOSGA027053-TA">
    <property type="protein sequence ID" value="BGIOSGA027053-PA"/>
    <property type="gene ID" value="BGIOSGA027053"/>
</dbReference>
<dbReference type="Gramene" id="OsKYG_08g0013880.01">
    <property type="protein sequence ID" value="OsKYG_08g0013880.01"/>
    <property type="gene ID" value="OsKYG_08g0013880"/>
</dbReference>
<dbReference type="Gramene" id="OsLiXu_08g0014530.01">
    <property type="protein sequence ID" value="OsLiXu_08g0014530.01"/>
    <property type="gene ID" value="OsLiXu_08g0014530"/>
</dbReference>
<dbReference type="Gramene" id="OsZS97_08G014160_01">
    <property type="protein sequence ID" value="OsZS97_08G014160_01"/>
    <property type="gene ID" value="OsZS97_08G014160"/>
</dbReference>
<dbReference type="HOGENOM" id="CLU_110012_0_0_1"/>
<dbReference type="OMA" id="DEYEFAQ"/>
<dbReference type="Proteomes" id="UP000007015">
    <property type="component" value="Chromosome 8"/>
</dbReference>
<dbReference type="GO" id="GO:0009507">
    <property type="term" value="C:chloroplast"/>
    <property type="evidence" value="ECO:0007669"/>
    <property type="project" value="UniProtKB-SubCell"/>
</dbReference>
<dbReference type="GO" id="GO:0009579">
    <property type="term" value="C:thylakoid"/>
    <property type="evidence" value="ECO:0007669"/>
    <property type="project" value="TreeGrafter"/>
</dbReference>
<dbReference type="GO" id="GO:0047134">
    <property type="term" value="F:protein-disulfide reductase [NAD(P)H] activity"/>
    <property type="evidence" value="ECO:0007669"/>
    <property type="project" value="EnsemblPlants"/>
</dbReference>
<dbReference type="GO" id="GO:0045454">
    <property type="term" value="P:cell redox homeostasis"/>
    <property type="evidence" value="ECO:0007669"/>
    <property type="project" value="EnsemblPlants"/>
</dbReference>
<dbReference type="GO" id="GO:0009657">
    <property type="term" value="P:plastid organization"/>
    <property type="evidence" value="ECO:0007669"/>
    <property type="project" value="EnsemblPlants"/>
</dbReference>
<dbReference type="CDD" id="cd02947">
    <property type="entry name" value="TRX_family"/>
    <property type="match status" value="1"/>
</dbReference>
<dbReference type="FunFam" id="3.40.30.10:FF:000149">
    <property type="entry name" value="Thioredoxin-like protein CITRX, chloroplastic"/>
    <property type="match status" value="1"/>
</dbReference>
<dbReference type="Gene3D" id="3.40.30.10">
    <property type="entry name" value="Glutaredoxin"/>
    <property type="match status" value="1"/>
</dbReference>
<dbReference type="InterPro" id="IPR044182">
    <property type="entry name" value="CITRX"/>
</dbReference>
<dbReference type="InterPro" id="IPR036249">
    <property type="entry name" value="Thioredoxin-like_sf"/>
</dbReference>
<dbReference type="InterPro" id="IPR017937">
    <property type="entry name" value="Thioredoxin_CS"/>
</dbReference>
<dbReference type="InterPro" id="IPR013766">
    <property type="entry name" value="Thioredoxin_domain"/>
</dbReference>
<dbReference type="PANTHER" id="PTHR47834">
    <property type="entry name" value="THIOREDOXIN-LIKE PROTEIN CITRX, CHLOROPLASTIC"/>
    <property type="match status" value="1"/>
</dbReference>
<dbReference type="PANTHER" id="PTHR47834:SF2">
    <property type="entry name" value="THIOREDOXIN-LIKE PROTEIN CITRX, CHLOROPLASTIC"/>
    <property type="match status" value="1"/>
</dbReference>
<dbReference type="Pfam" id="PF00085">
    <property type="entry name" value="Thioredoxin"/>
    <property type="match status" value="1"/>
</dbReference>
<dbReference type="PRINTS" id="PR00421">
    <property type="entry name" value="THIOREDOXIN"/>
</dbReference>
<dbReference type="SUPFAM" id="SSF52833">
    <property type="entry name" value="Thioredoxin-like"/>
    <property type="match status" value="1"/>
</dbReference>
<dbReference type="PROSITE" id="PS00194">
    <property type="entry name" value="THIOREDOXIN_1"/>
    <property type="match status" value="1"/>
</dbReference>
<dbReference type="PROSITE" id="PS51352">
    <property type="entry name" value="THIOREDOXIN_2"/>
    <property type="match status" value="1"/>
</dbReference>
<evidence type="ECO:0000250" key="1">
    <source>
        <dbReference type="UniProtKB" id="P10599"/>
    </source>
</evidence>
<evidence type="ECO:0000250" key="2">
    <source>
        <dbReference type="UniProtKB" id="Q9M7X9"/>
    </source>
</evidence>
<evidence type="ECO:0000255" key="3"/>
<evidence type="ECO:0000255" key="4">
    <source>
        <dbReference type="PROSITE-ProRule" id="PRU00691"/>
    </source>
</evidence>
<evidence type="ECO:0000303" key="5">
    <source>
    </source>
</evidence>
<evidence type="ECO:0000305" key="6"/>
<evidence type="ECO:0000312" key="7">
    <source>
        <dbReference type="EMBL" id="EAZ06817.1"/>
    </source>
</evidence>
<protein>
    <recommendedName>
        <fullName evidence="6">Thioredoxin-like protein CITRX, chloroplastic</fullName>
        <ecNumber evidence="6">1.8.-.-</ecNumber>
    </recommendedName>
    <alternativeName>
        <fullName evidence="5">Cf-9-interacting thioredoxin</fullName>
        <shortName evidence="5">OsCiTrx</shortName>
    </alternativeName>
</protein>
<organism evidence="7">
    <name type="scientific">Oryza sativa subsp. indica</name>
    <name type="common">Rice</name>
    <dbReference type="NCBI Taxonomy" id="39946"/>
    <lineage>
        <taxon>Eukaryota</taxon>
        <taxon>Viridiplantae</taxon>
        <taxon>Streptophyta</taxon>
        <taxon>Embryophyta</taxon>
        <taxon>Tracheophyta</taxon>
        <taxon>Spermatophyta</taxon>
        <taxon>Magnoliopsida</taxon>
        <taxon>Liliopsida</taxon>
        <taxon>Poales</taxon>
        <taxon>Poaceae</taxon>
        <taxon>BOP clade</taxon>
        <taxon>Oryzoideae</taxon>
        <taxon>Oryzeae</taxon>
        <taxon>Oryzinae</taxon>
        <taxon>Oryza</taxon>
        <taxon>Oryza sativa</taxon>
    </lineage>
</organism>
<accession>A2YUQ6</accession>
<gene>
    <name evidence="7" type="ORF">OsI_29059</name>
</gene>
<reference key="1">
    <citation type="journal article" date="2005" name="PLoS Biol.">
        <title>The genomes of Oryza sativa: a history of duplications.</title>
        <authorList>
            <person name="Yu J."/>
            <person name="Wang J."/>
            <person name="Lin W."/>
            <person name="Li S."/>
            <person name="Li H."/>
            <person name="Zhou J."/>
            <person name="Ni P."/>
            <person name="Dong W."/>
            <person name="Hu S."/>
            <person name="Zeng C."/>
            <person name="Zhang J."/>
            <person name="Zhang Y."/>
            <person name="Li R."/>
            <person name="Xu Z."/>
            <person name="Li S."/>
            <person name="Li X."/>
            <person name="Zheng H."/>
            <person name="Cong L."/>
            <person name="Lin L."/>
            <person name="Yin J."/>
            <person name="Geng J."/>
            <person name="Li G."/>
            <person name="Shi J."/>
            <person name="Liu J."/>
            <person name="Lv H."/>
            <person name="Li J."/>
            <person name="Wang J."/>
            <person name="Deng Y."/>
            <person name="Ran L."/>
            <person name="Shi X."/>
            <person name="Wang X."/>
            <person name="Wu Q."/>
            <person name="Li C."/>
            <person name="Ren X."/>
            <person name="Wang J."/>
            <person name="Wang X."/>
            <person name="Li D."/>
            <person name="Liu D."/>
            <person name="Zhang X."/>
            <person name="Ji Z."/>
            <person name="Zhao W."/>
            <person name="Sun Y."/>
            <person name="Zhang Z."/>
            <person name="Bao J."/>
            <person name="Han Y."/>
            <person name="Dong L."/>
            <person name="Ji J."/>
            <person name="Chen P."/>
            <person name="Wu S."/>
            <person name="Liu J."/>
            <person name="Xiao Y."/>
            <person name="Bu D."/>
            <person name="Tan J."/>
            <person name="Yang L."/>
            <person name="Ye C."/>
            <person name="Zhang J."/>
            <person name="Xu J."/>
            <person name="Zhou Y."/>
            <person name="Yu Y."/>
            <person name="Zhang B."/>
            <person name="Zhuang S."/>
            <person name="Wei H."/>
            <person name="Liu B."/>
            <person name="Lei M."/>
            <person name="Yu H."/>
            <person name="Li Y."/>
            <person name="Xu H."/>
            <person name="Wei S."/>
            <person name="He X."/>
            <person name="Fang L."/>
            <person name="Zhang Z."/>
            <person name="Zhang Y."/>
            <person name="Huang X."/>
            <person name="Su Z."/>
            <person name="Tong W."/>
            <person name="Li J."/>
            <person name="Tong Z."/>
            <person name="Li S."/>
            <person name="Ye J."/>
            <person name="Wang L."/>
            <person name="Fang L."/>
            <person name="Lei T."/>
            <person name="Chen C.-S."/>
            <person name="Chen H.-C."/>
            <person name="Xu Z."/>
            <person name="Li H."/>
            <person name="Huang H."/>
            <person name="Zhang F."/>
            <person name="Xu H."/>
            <person name="Li N."/>
            <person name="Zhao C."/>
            <person name="Li S."/>
            <person name="Dong L."/>
            <person name="Huang Y."/>
            <person name="Li L."/>
            <person name="Xi Y."/>
            <person name="Qi Q."/>
            <person name="Li W."/>
            <person name="Zhang B."/>
            <person name="Hu W."/>
            <person name="Zhang Y."/>
            <person name="Tian X."/>
            <person name="Jiao Y."/>
            <person name="Liang X."/>
            <person name="Jin J."/>
            <person name="Gao L."/>
            <person name="Zheng W."/>
            <person name="Hao B."/>
            <person name="Liu S.-M."/>
            <person name="Wang W."/>
            <person name="Yuan L."/>
            <person name="Cao M."/>
            <person name="McDermott J."/>
            <person name="Samudrala R."/>
            <person name="Wang J."/>
            <person name="Wong G.K.-S."/>
            <person name="Yang H."/>
        </authorList>
    </citation>
    <scope>NUCLEOTIDE SEQUENCE [LARGE SCALE GENOMIC DNA]</scope>
    <source>
        <strain>cv. 93-11</strain>
    </source>
</reference>
<reference key="2">
    <citation type="journal article" date="2009" name="Mol. Plant">
        <title>Comparative genomic study of the thioredoxin family in photosynthetic organisms with emphasis on Populus trichocarpa.</title>
        <authorList>
            <person name="Chibani K."/>
            <person name="Wingsle G."/>
            <person name="Jacquot J.P."/>
            <person name="Gelhaye E."/>
            <person name="Rouhier N."/>
        </authorList>
    </citation>
    <scope>GENE FAMILY</scope>
    <scope>NOMENCLATURE</scope>
</reference>
<keyword id="KW-0150">Chloroplast</keyword>
<keyword id="KW-1015">Disulfide bond</keyword>
<keyword id="KW-0249">Electron transport</keyword>
<keyword id="KW-0560">Oxidoreductase</keyword>
<keyword id="KW-0934">Plastid</keyword>
<keyword id="KW-0676">Redox-active center</keyword>
<keyword id="KW-1185">Reference proteome</keyword>
<keyword id="KW-0809">Transit peptide</keyword>
<keyword id="KW-0813">Transport</keyword>
<comment type="function">
    <text evidence="2">Probable thiol-disulfide oxidoreductase that may play a role in proper chloroplast development.</text>
</comment>
<comment type="subcellular location">
    <subcellularLocation>
        <location evidence="3">Plastid</location>
        <location evidence="3">Chloroplast</location>
    </subcellularLocation>
</comment>
<comment type="similarity">
    <text evidence="6">Belongs to the thioredoxin family. Plant CITRX-type subfamily.</text>
</comment>